<protein>
    <recommendedName>
        <fullName>Uncharacterized transcriptional regulatory protein C15D4.02</fullName>
    </recommendedName>
</protein>
<name>YOG2_SCHPO</name>
<accession>O74308</accession>
<dbReference type="EMBL" id="CU329671">
    <property type="protein sequence ID" value="CAA20477.3"/>
    <property type="molecule type" value="Genomic_DNA"/>
</dbReference>
<dbReference type="PIR" id="T39478">
    <property type="entry name" value="T39478"/>
</dbReference>
<dbReference type="SMR" id="O74308"/>
<dbReference type="BioGRID" id="276377">
    <property type="interactions" value="3"/>
</dbReference>
<dbReference type="FunCoup" id="O74308">
    <property type="interactions" value="1"/>
</dbReference>
<dbReference type="STRING" id="284812.O74308"/>
<dbReference type="iPTMnet" id="O74308"/>
<dbReference type="PaxDb" id="4896-SPBC15D4.02.1"/>
<dbReference type="EnsemblFungi" id="SPBC15D4.02.1">
    <property type="protein sequence ID" value="SPBC15D4.02.1:pep"/>
    <property type="gene ID" value="SPBC15D4.02"/>
</dbReference>
<dbReference type="KEGG" id="spo:2539828"/>
<dbReference type="PomBase" id="SPBC15D4.02"/>
<dbReference type="VEuPathDB" id="FungiDB:SPBC15D4.02"/>
<dbReference type="eggNOG" id="ENOG502QT9U">
    <property type="taxonomic scope" value="Eukaryota"/>
</dbReference>
<dbReference type="HOGENOM" id="CLU_020035_0_0_1"/>
<dbReference type="InParanoid" id="O74308"/>
<dbReference type="OMA" id="YTHFPRP"/>
<dbReference type="PRO" id="PR:O74308"/>
<dbReference type="Proteomes" id="UP000002485">
    <property type="component" value="Chromosome II"/>
</dbReference>
<dbReference type="GO" id="GO:0000785">
    <property type="term" value="C:chromatin"/>
    <property type="evidence" value="ECO:0000314"/>
    <property type="project" value="PomBase"/>
</dbReference>
<dbReference type="GO" id="GO:0005634">
    <property type="term" value="C:nucleus"/>
    <property type="evidence" value="ECO:0000314"/>
    <property type="project" value="PomBase"/>
</dbReference>
<dbReference type="GO" id="GO:0000981">
    <property type="term" value="F:DNA-binding transcription factor activity, RNA polymerase II-specific"/>
    <property type="evidence" value="ECO:0000255"/>
    <property type="project" value="PomBase"/>
</dbReference>
<dbReference type="GO" id="GO:0000978">
    <property type="term" value="F:RNA polymerase II cis-regulatory region sequence-specific DNA binding"/>
    <property type="evidence" value="ECO:0000255"/>
    <property type="project" value="PomBase"/>
</dbReference>
<dbReference type="GO" id="GO:0008270">
    <property type="term" value="F:zinc ion binding"/>
    <property type="evidence" value="ECO:0000255"/>
    <property type="project" value="PomBase"/>
</dbReference>
<dbReference type="GO" id="GO:0036349">
    <property type="term" value="P:galactose-specific flocculation"/>
    <property type="evidence" value="ECO:0000315"/>
    <property type="project" value="PomBase"/>
</dbReference>
<dbReference type="GO" id="GO:0060257">
    <property type="term" value="P:negative regulation of flocculation"/>
    <property type="evidence" value="ECO:0000315"/>
    <property type="project" value="PomBase"/>
</dbReference>
<dbReference type="GO" id="GO:0000122">
    <property type="term" value="P:negative regulation of transcription by RNA polymerase II"/>
    <property type="evidence" value="ECO:0000315"/>
    <property type="project" value="PomBase"/>
</dbReference>
<dbReference type="GO" id="GO:0006357">
    <property type="term" value="P:regulation of transcription by RNA polymerase II"/>
    <property type="evidence" value="ECO:0000318"/>
    <property type="project" value="GO_Central"/>
</dbReference>
<dbReference type="CDD" id="cd00067">
    <property type="entry name" value="GAL4"/>
    <property type="match status" value="1"/>
</dbReference>
<dbReference type="Gene3D" id="4.10.240.10">
    <property type="entry name" value="Zn(2)-C6 fungal-type DNA-binding domain"/>
    <property type="match status" value="1"/>
</dbReference>
<dbReference type="InterPro" id="IPR052360">
    <property type="entry name" value="Transcr_Regulatory_Proteins"/>
</dbReference>
<dbReference type="InterPro" id="IPR036864">
    <property type="entry name" value="Zn2-C6_fun-type_DNA-bd_sf"/>
</dbReference>
<dbReference type="InterPro" id="IPR001138">
    <property type="entry name" value="Zn2Cys6_DnaBD"/>
</dbReference>
<dbReference type="PANTHER" id="PTHR36206">
    <property type="entry name" value="ASPERCRYPTIN BIOSYNTHESIS CLUSTER-SPECIFIC TRANSCRIPTION REGULATOR ATNN-RELATED"/>
    <property type="match status" value="1"/>
</dbReference>
<dbReference type="PANTHER" id="PTHR36206:SF17">
    <property type="entry name" value="TRANSCRIPTION FACTOR"/>
    <property type="match status" value="1"/>
</dbReference>
<dbReference type="Pfam" id="PF00172">
    <property type="entry name" value="Zn_clus"/>
    <property type="match status" value="1"/>
</dbReference>
<dbReference type="SMART" id="SM00066">
    <property type="entry name" value="GAL4"/>
    <property type="match status" value="1"/>
</dbReference>
<dbReference type="SUPFAM" id="SSF57701">
    <property type="entry name" value="Zn2/Cys6 DNA-binding domain"/>
    <property type="match status" value="1"/>
</dbReference>
<dbReference type="PROSITE" id="PS00463">
    <property type="entry name" value="ZN2_CY6_FUNGAL_1"/>
    <property type="match status" value="1"/>
</dbReference>
<dbReference type="PROSITE" id="PS50048">
    <property type="entry name" value="ZN2_CY6_FUNGAL_2"/>
    <property type="match status" value="1"/>
</dbReference>
<sequence>MEYHPSSQSPQVNPGMESQQGGYTYTYQQPAPPNSLHLQHPSILTRLPPLSSSVVSPSLASLPPFTPTSTYHSIAALTPPSYPQSSSAPSNNSYTIVPSPHDPSNAYSMHHVLQNTAPQSVPSPSPIEMVPPSPPKTGSNNSAPVTGKTVQSGNALNNSGLVKRQARKRTKTGCLTCRKRRIKCDERKPICYNCIKSKRQCEGYTHFPRPSGTFTASRRIPVSSLLSEPAPHGLAGQPTHPTFLYYIQSVAPSLCLWDACHFPPLSPYSSFSSIYWSSTVPELALRNPNISVALYAFASAKRHLTDDAVAFARQARVALTNITTTDSLLILVLLAVTQLYIPKSDIQLFNFAVDQVVKFDASLMTSPSDEIITYLLRRMFIRQVVLAGIVKPLASGLNPLPLLKCDLPPATTPTAVLDESLFHLGLRKLCHEKGLEPEFTKWSKNCPIDKADLPRLALLMIHAVFTSPVSLAQWVELILQNPDPTPAIHIARACLLAVHGVVDLGDLQMKVEKCVQSCEERQLQATISNFSTEVAQTNSSALAIGCQ</sequence>
<feature type="chain" id="PRO_0000310392" description="Uncharacterized transcriptional regulatory protein C15D4.02">
    <location>
        <begin position="1"/>
        <end position="547"/>
    </location>
</feature>
<feature type="DNA-binding region" description="Zn(2)-C6 fungal-type" evidence="1">
    <location>
        <begin position="174"/>
        <end position="201"/>
    </location>
</feature>
<feature type="region of interest" description="Disordered" evidence="2">
    <location>
        <begin position="1"/>
        <end position="41"/>
    </location>
</feature>
<feature type="region of interest" description="Disordered" evidence="2">
    <location>
        <begin position="80"/>
        <end position="165"/>
    </location>
</feature>
<feature type="compositionally biased region" description="Polar residues" evidence="2">
    <location>
        <begin position="1"/>
        <end position="18"/>
    </location>
</feature>
<feature type="compositionally biased region" description="Low complexity" evidence="2">
    <location>
        <begin position="19"/>
        <end position="29"/>
    </location>
</feature>
<feature type="compositionally biased region" description="Low complexity" evidence="2">
    <location>
        <begin position="83"/>
        <end position="94"/>
    </location>
</feature>
<feature type="compositionally biased region" description="Pro residues" evidence="2">
    <location>
        <begin position="121"/>
        <end position="135"/>
    </location>
</feature>
<feature type="compositionally biased region" description="Polar residues" evidence="2">
    <location>
        <begin position="136"/>
        <end position="160"/>
    </location>
</feature>
<gene>
    <name type="ORF">SPBC15D4.02</name>
</gene>
<organism>
    <name type="scientific">Schizosaccharomyces pombe (strain 972 / ATCC 24843)</name>
    <name type="common">Fission yeast</name>
    <dbReference type="NCBI Taxonomy" id="284812"/>
    <lineage>
        <taxon>Eukaryota</taxon>
        <taxon>Fungi</taxon>
        <taxon>Dikarya</taxon>
        <taxon>Ascomycota</taxon>
        <taxon>Taphrinomycotina</taxon>
        <taxon>Schizosaccharomycetes</taxon>
        <taxon>Schizosaccharomycetales</taxon>
        <taxon>Schizosaccharomycetaceae</taxon>
        <taxon>Schizosaccharomyces</taxon>
    </lineage>
</organism>
<keyword id="KW-0238">DNA-binding</keyword>
<keyword id="KW-0479">Metal-binding</keyword>
<keyword id="KW-0539">Nucleus</keyword>
<keyword id="KW-1185">Reference proteome</keyword>
<keyword id="KW-0804">Transcription</keyword>
<keyword id="KW-0805">Transcription regulation</keyword>
<keyword id="KW-0862">Zinc</keyword>
<reference key="1">
    <citation type="journal article" date="2002" name="Nature">
        <title>The genome sequence of Schizosaccharomyces pombe.</title>
        <authorList>
            <person name="Wood V."/>
            <person name="Gwilliam R."/>
            <person name="Rajandream M.A."/>
            <person name="Lyne M.H."/>
            <person name="Lyne R."/>
            <person name="Stewart A."/>
            <person name="Sgouros J.G."/>
            <person name="Peat N."/>
            <person name="Hayles J."/>
            <person name="Baker S.G."/>
            <person name="Basham D."/>
            <person name="Bowman S."/>
            <person name="Brooks K."/>
            <person name="Brown D."/>
            <person name="Brown S."/>
            <person name="Chillingworth T."/>
            <person name="Churcher C.M."/>
            <person name="Collins M."/>
            <person name="Connor R."/>
            <person name="Cronin A."/>
            <person name="Davis P."/>
            <person name="Feltwell T."/>
            <person name="Fraser A."/>
            <person name="Gentles S."/>
            <person name="Goble A."/>
            <person name="Hamlin N."/>
            <person name="Harris D.E."/>
            <person name="Hidalgo J."/>
            <person name="Hodgson G."/>
            <person name="Holroyd S."/>
            <person name="Hornsby T."/>
            <person name="Howarth S."/>
            <person name="Huckle E.J."/>
            <person name="Hunt S."/>
            <person name="Jagels K."/>
            <person name="James K.D."/>
            <person name="Jones L."/>
            <person name="Jones M."/>
            <person name="Leather S."/>
            <person name="McDonald S."/>
            <person name="McLean J."/>
            <person name="Mooney P."/>
            <person name="Moule S."/>
            <person name="Mungall K.L."/>
            <person name="Murphy L.D."/>
            <person name="Niblett D."/>
            <person name="Odell C."/>
            <person name="Oliver K."/>
            <person name="O'Neil S."/>
            <person name="Pearson D."/>
            <person name="Quail M.A."/>
            <person name="Rabbinowitsch E."/>
            <person name="Rutherford K.M."/>
            <person name="Rutter S."/>
            <person name="Saunders D."/>
            <person name="Seeger K."/>
            <person name="Sharp S."/>
            <person name="Skelton J."/>
            <person name="Simmonds M.N."/>
            <person name="Squares R."/>
            <person name="Squares S."/>
            <person name="Stevens K."/>
            <person name="Taylor K."/>
            <person name="Taylor R.G."/>
            <person name="Tivey A."/>
            <person name="Walsh S.V."/>
            <person name="Warren T."/>
            <person name="Whitehead S."/>
            <person name="Woodward J.R."/>
            <person name="Volckaert G."/>
            <person name="Aert R."/>
            <person name="Robben J."/>
            <person name="Grymonprez B."/>
            <person name="Weltjens I."/>
            <person name="Vanstreels E."/>
            <person name="Rieger M."/>
            <person name="Schaefer M."/>
            <person name="Mueller-Auer S."/>
            <person name="Gabel C."/>
            <person name="Fuchs M."/>
            <person name="Duesterhoeft A."/>
            <person name="Fritzc C."/>
            <person name="Holzer E."/>
            <person name="Moestl D."/>
            <person name="Hilbert H."/>
            <person name="Borzym K."/>
            <person name="Langer I."/>
            <person name="Beck A."/>
            <person name="Lehrach H."/>
            <person name="Reinhardt R."/>
            <person name="Pohl T.M."/>
            <person name="Eger P."/>
            <person name="Zimmermann W."/>
            <person name="Wedler H."/>
            <person name="Wambutt R."/>
            <person name="Purnelle B."/>
            <person name="Goffeau A."/>
            <person name="Cadieu E."/>
            <person name="Dreano S."/>
            <person name="Gloux S."/>
            <person name="Lelaure V."/>
            <person name="Mottier S."/>
            <person name="Galibert F."/>
            <person name="Aves S.J."/>
            <person name="Xiang Z."/>
            <person name="Hunt C."/>
            <person name="Moore K."/>
            <person name="Hurst S.M."/>
            <person name="Lucas M."/>
            <person name="Rochet M."/>
            <person name="Gaillardin C."/>
            <person name="Tallada V.A."/>
            <person name="Garzon A."/>
            <person name="Thode G."/>
            <person name="Daga R.R."/>
            <person name="Cruzado L."/>
            <person name="Jimenez J."/>
            <person name="Sanchez M."/>
            <person name="del Rey F."/>
            <person name="Benito J."/>
            <person name="Dominguez A."/>
            <person name="Revuelta J.L."/>
            <person name="Moreno S."/>
            <person name="Armstrong J."/>
            <person name="Forsburg S.L."/>
            <person name="Cerutti L."/>
            <person name="Lowe T."/>
            <person name="McCombie W.R."/>
            <person name="Paulsen I."/>
            <person name="Potashkin J."/>
            <person name="Shpakovski G.V."/>
            <person name="Ussery D."/>
            <person name="Barrell B.G."/>
            <person name="Nurse P."/>
        </authorList>
    </citation>
    <scope>NUCLEOTIDE SEQUENCE [LARGE SCALE GENOMIC DNA]</scope>
    <source>
        <strain>972 / ATCC 24843</strain>
    </source>
</reference>
<reference key="2">
    <citation type="journal article" date="2011" name="Science">
        <title>Comparative functional genomics of the fission yeasts.</title>
        <authorList>
            <person name="Rhind N."/>
            <person name="Chen Z."/>
            <person name="Yassour M."/>
            <person name="Thompson D.A."/>
            <person name="Haas B.J."/>
            <person name="Habib N."/>
            <person name="Wapinski I."/>
            <person name="Roy S."/>
            <person name="Lin M.F."/>
            <person name="Heiman D.I."/>
            <person name="Young S.K."/>
            <person name="Furuya K."/>
            <person name="Guo Y."/>
            <person name="Pidoux A."/>
            <person name="Chen H.M."/>
            <person name="Robbertse B."/>
            <person name="Goldberg J.M."/>
            <person name="Aoki K."/>
            <person name="Bayne E.H."/>
            <person name="Berlin A.M."/>
            <person name="Desjardins C.A."/>
            <person name="Dobbs E."/>
            <person name="Dukaj L."/>
            <person name="Fan L."/>
            <person name="FitzGerald M.G."/>
            <person name="French C."/>
            <person name="Gujja S."/>
            <person name="Hansen K."/>
            <person name="Keifenheim D."/>
            <person name="Levin J.Z."/>
            <person name="Mosher R.A."/>
            <person name="Mueller C.A."/>
            <person name="Pfiffner J."/>
            <person name="Priest M."/>
            <person name="Russ C."/>
            <person name="Smialowska A."/>
            <person name="Swoboda P."/>
            <person name="Sykes S.M."/>
            <person name="Vaughn M."/>
            <person name="Vengrova S."/>
            <person name="Yoder R."/>
            <person name="Zeng Q."/>
            <person name="Allshire R."/>
            <person name="Baulcombe D."/>
            <person name="Birren B.W."/>
            <person name="Brown W."/>
            <person name="Ekwall K."/>
            <person name="Kellis M."/>
            <person name="Leatherwood J."/>
            <person name="Levin H."/>
            <person name="Margalit H."/>
            <person name="Martienssen R."/>
            <person name="Nieduszynski C.A."/>
            <person name="Spatafora J.W."/>
            <person name="Friedman N."/>
            <person name="Dalgaard J.Z."/>
            <person name="Baumann P."/>
            <person name="Niki H."/>
            <person name="Regev A."/>
            <person name="Nusbaum C."/>
        </authorList>
    </citation>
    <scope>REVISION OF GENE MODEL</scope>
</reference>
<reference key="3">
    <citation type="journal article" date="2006" name="Nat. Biotechnol.">
        <title>ORFeome cloning and global analysis of protein localization in the fission yeast Schizosaccharomyces pombe.</title>
        <authorList>
            <person name="Matsuyama A."/>
            <person name="Arai R."/>
            <person name="Yashiroda Y."/>
            <person name="Shirai A."/>
            <person name="Kamata A."/>
            <person name="Sekido S."/>
            <person name="Kobayashi Y."/>
            <person name="Hashimoto A."/>
            <person name="Hamamoto M."/>
            <person name="Hiraoka Y."/>
            <person name="Horinouchi S."/>
            <person name="Yoshida M."/>
        </authorList>
    </citation>
    <scope>SUBCELLULAR LOCATION [LARGE SCALE ANALYSIS]</scope>
</reference>
<comment type="subcellular location">
    <subcellularLocation>
        <location evidence="1 3">Nucleus</location>
    </subcellularLocation>
</comment>
<proteinExistence type="inferred from homology"/>
<evidence type="ECO:0000255" key="1">
    <source>
        <dbReference type="PROSITE-ProRule" id="PRU00227"/>
    </source>
</evidence>
<evidence type="ECO:0000256" key="2">
    <source>
        <dbReference type="SAM" id="MobiDB-lite"/>
    </source>
</evidence>
<evidence type="ECO:0000269" key="3">
    <source>
    </source>
</evidence>